<evidence type="ECO:0000255" key="1">
    <source>
        <dbReference type="HAMAP-Rule" id="MF_01357"/>
    </source>
</evidence>
<feature type="chain" id="PRO_0000358244" description="NAD(P)H-quinone oxidoreductase subunit J, chloroplastic">
    <location>
        <begin position="1"/>
        <end position="158"/>
    </location>
</feature>
<proteinExistence type="inferred from homology"/>
<geneLocation type="chloroplast"/>
<reference key="1">
    <citation type="submission" date="2007-03" db="EMBL/GenBank/DDBJ databases">
        <title>Sequencing analysis of Barbarea verna chloroplast DNA.</title>
        <authorList>
            <person name="Hosouchi T."/>
            <person name="Tsuruoka H."/>
            <person name="Kotani H."/>
        </authorList>
    </citation>
    <scope>NUCLEOTIDE SEQUENCE [LARGE SCALE GENOMIC DNA]</scope>
</reference>
<protein>
    <recommendedName>
        <fullName evidence="1">NAD(P)H-quinone oxidoreductase subunit J, chloroplastic</fullName>
        <ecNumber evidence="1">7.1.1.-</ecNumber>
    </recommendedName>
    <alternativeName>
        <fullName>NAD(P)H dehydrogenase subunit J</fullName>
    </alternativeName>
    <alternativeName>
        <fullName evidence="1">NADH-plastoquinone oxidoreductase subunit J</fullName>
    </alternativeName>
</protein>
<gene>
    <name evidence="1" type="primary">ndhJ</name>
</gene>
<sequence length="158" mass="18536">MQGTLSVWLAKRGLVHRSLGFDYQGIETLQIKPEDWDSIAVILYVYGYNYLRSQCAYDVAPGGLLASVYHLTRIEYGVNQAEEVCIKVFTHRSNPRIPSVFWVWKSTDFQERESYDMLGITYDSHPRLKRILMPESWIGWPLRKDYIAPNFYEIQDAY</sequence>
<name>NDHJ_BARVE</name>
<keyword id="KW-0150">Chloroplast</keyword>
<keyword id="KW-0472">Membrane</keyword>
<keyword id="KW-0520">NAD</keyword>
<keyword id="KW-0521">NADP</keyword>
<keyword id="KW-0934">Plastid</keyword>
<keyword id="KW-0618">Plastoquinone</keyword>
<keyword id="KW-0874">Quinone</keyword>
<keyword id="KW-0793">Thylakoid</keyword>
<keyword id="KW-1278">Translocase</keyword>
<keyword id="KW-0813">Transport</keyword>
<organism>
    <name type="scientific">Barbarea verna</name>
    <name type="common">Land cress</name>
    <name type="synonym">Erysimum vernum</name>
    <dbReference type="NCBI Taxonomy" id="50458"/>
    <lineage>
        <taxon>Eukaryota</taxon>
        <taxon>Viridiplantae</taxon>
        <taxon>Streptophyta</taxon>
        <taxon>Embryophyta</taxon>
        <taxon>Tracheophyta</taxon>
        <taxon>Spermatophyta</taxon>
        <taxon>Magnoliopsida</taxon>
        <taxon>eudicotyledons</taxon>
        <taxon>Gunneridae</taxon>
        <taxon>Pentapetalae</taxon>
        <taxon>rosids</taxon>
        <taxon>malvids</taxon>
        <taxon>Brassicales</taxon>
        <taxon>Brassicaceae</taxon>
        <taxon>Cardamineae</taxon>
        <taxon>Barbarea</taxon>
    </lineage>
</organism>
<dbReference type="EC" id="7.1.1.-" evidence="1"/>
<dbReference type="EMBL" id="AP009370">
    <property type="protein sequence ID" value="BAF50113.1"/>
    <property type="molecule type" value="Genomic_DNA"/>
</dbReference>
<dbReference type="RefSeq" id="YP_001123289.1">
    <property type="nucleotide sequence ID" value="NC_009269.1"/>
</dbReference>
<dbReference type="SMR" id="A4QKA8"/>
<dbReference type="GeneID" id="4961824"/>
<dbReference type="GO" id="GO:0009535">
    <property type="term" value="C:chloroplast thylakoid membrane"/>
    <property type="evidence" value="ECO:0007669"/>
    <property type="project" value="UniProtKB-SubCell"/>
</dbReference>
<dbReference type="GO" id="GO:0008137">
    <property type="term" value="F:NADH dehydrogenase (ubiquinone) activity"/>
    <property type="evidence" value="ECO:0007669"/>
    <property type="project" value="InterPro"/>
</dbReference>
<dbReference type="GO" id="GO:0048038">
    <property type="term" value="F:quinone binding"/>
    <property type="evidence" value="ECO:0007669"/>
    <property type="project" value="UniProtKB-KW"/>
</dbReference>
<dbReference type="GO" id="GO:0019684">
    <property type="term" value="P:photosynthesis, light reaction"/>
    <property type="evidence" value="ECO:0007669"/>
    <property type="project" value="UniProtKB-UniRule"/>
</dbReference>
<dbReference type="FunFam" id="3.30.460.80:FF:000004">
    <property type="entry name" value="NAD(P)H-quinone oxidoreductase subunit J, chloroplastic"/>
    <property type="match status" value="1"/>
</dbReference>
<dbReference type="Gene3D" id="3.30.460.80">
    <property type="entry name" value="NADH:ubiquinone oxidoreductase, 30kDa subunit"/>
    <property type="match status" value="1"/>
</dbReference>
<dbReference type="HAMAP" id="MF_01357">
    <property type="entry name" value="NDH1_NuoC"/>
    <property type="match status" value="1"/>
</dbReference>
<dbReference type="InterPro" id="IPR010218">
    <property type="entry name" value="NADH_DH_suC"/>
</dbReference>
<dbReference type="InterPro" id="IPR037232">
    <property type="entry name" value="NADH_quin_OxRdtase_su_C/D-like"/>
</dbReference>
<dbReference type="InterPro" id="IPR001268">
    <property type="entry name" value="NADH_UbQ_OxRdtase_30kDa_su"/>
</dbReference>
<dbReference type="InterPro" id="IPR020396">
    <property type="entry name" value="NADH_UbQ_OxRdtase_CS"/>
</dbReference>
<dbReference type="NCBIfam" id="NF009141">
    <property type="entry name" value="PRK12494.1"/>
    <property type="match status" value="1"/>
</dbReference>
<dbReference type="PANTHER" id="PTHR10884:SF14">
    <property type="entry name" value="NADH DEHYDROGENASE [UBIQUINONE] IRON-SULFUR PROTEIN 3, MITOCHONDRIAL"/>
    <property type="match status" value="1"/>
</dbReference>
<dbReference type="PANTHER" id="PTHR10884">
    <property type="entry name" value="NADH DEHYDROGENASE UBIQUINONE IRON-SULFUR PROTEIN 3"/>
    <property type="match status" value="1"/>
</dbReference>
<dbReference type="Pfam" id="PF00329">
    <property type="entry name" value="Complex1_30kDa"/>
    <property type="match status" value="1"/>
</dbReference>
<dbReference type="SUPFAM" id="SSF143243">
    <property type="entry name" value="Nqo5-like"/>
    <property type="match status" value="1"/>
</dbReference>
<dbReference type="PROSITE" id="PS00542">
    <property type="entry name" value="COMPLEX1_30K"/>
    <property type="match status" value="1"/>
</dbReference>
<accession>A4QKA8</accession>
<comment type="function">
    <text evidence="1">NDH shuttles electrons from NAD(P)H:plastoquinone, via FMN and iron-sulfur (Fe-S) centers, to quinones in the photosynthetic chain and possibly in a chloroplast respiratory chain. The immediate electron acceptor for the enzyme in this species is believed to be plastoquinone. Couples the redox reaction to proton translocation, and thus conserves the redox energy in a proton gradient.</text>
</comment>
<comment type="catalytic activity">
    <reaction evidence="1">
        <text>a plastoquinone + NADH + (n+1) H(+)(in) = a plastoquinol + NAD(+) + n H(+)(out)</text>
        <dbReference type="Rhea" id="RHEA:42608"/>
        <dbReference type="Rhea" id="RHEA-COMP:9561"/>
        <dbReference type="Rhea" id="RHEA-COMP:9562"/>
        <dbReference type="ChEBI" id="CHEBI:15378"/>
        <dbReference type="ChEBI" id="CHEBI:17757"/>
        <dbReference type="ChEBI" id="CHEBI:57540"/>
        <dbReference type="ChEBI" id="CHEBI:57945"/>
        <dbReference type="ChEBI" id="CHEBI:62192"/>
    </reaction>
</comment>
<comment type="catalytic activity">
    <reaction evidence="1">
        <text>a plastoquinone + NADPH + (n+1) H(+)(in) = a plastoquinol + NADP(+) + n H(+)(out)</text>
        <dbReference type="Rhea" id="RHEA:42612"/>
        <dbReference type="Rhea" id="RHEA-COMP:9561"/>
        <dbReference type="Rhea" id="RHEA-COMP:9562"/>
        <dbReference type="ChEBI" id="CHEBI:15378"/>
        <dbReference type="ChEBI" id="CHEBI:17757"/>
        <dbReference type="ChEBI" id="CHEBI:57783"/>
        <dbReference type="ChEBI" id="CHEBI:58349"/>
        <dbReference type="ChEBI" id="CHEBI:62192"/>
    </reaction>
</comment>
<comment type="subunit">
    <text evidence="1">NDH is composed of at least 16 different subunits, 5 of which are encoded in the nucleus.</text>
</comment>
<comment type="subcellular location">
    <subcellularLocation>
        <location evidence="1">Plastid</location>
        <location evidence="1">Chloroplast thylakoid membrane</location>
        <topology evidence="1">Peripheral membrane protein</topology>
        <orientation evidence="1">Stromal side</orientation>
    </subcellularLocation>
</comment>
<comment type="similarity">
    <text evidence="1">Belongs to the complex I 30 kDa subunit family.</text>
</comment>